<protein>
    <recommendedName>
        <fullName evidence="1">Chromosomal replication initiator protein DnaA</fullName>
    </recommendedName>
</protein>
<reference key="1">
    <citation type="journal article" date="2006" name="Proc. Natl. Acad. Sci. U.S.A.">
        <title>Comparative genomics of the lactic acid bacteria.</title>
        <authorList>
            <person name="Makarova K.S."/>
            <person name="Slesarev A."/>
            <person name="Wolf Y.I."/>
            <person name="Sorokin A."/>
            <person name="Mirkin B."/>
            <person name="Koonin E.V."/>
            <person name="Pavlov A."/>
            <person name="Pavlova N."/>
            <person name="Karamychev V."/>
            <person name="Polouchine N."/>
            <person name="Shakhova V."/>
            <person name="Grigoriev I."/>
            <person name="Lou Y."/>
            <person name="Rohksar D."/>
            <person name="Lucas S."/>
            <person name="Huang K."/>
            <person name="Goodstein D.M."/>
            <person name="Hawkins T."/>
            <person name="Plengvidhya V."/>
            <person name="Welker D."/>
            <person name="Hughes J."/>
            <person name="Goh Y."/>
            <person name="Benson A."/>
            <person name="Baldwin K."/>
            <person name="Lee J.-H."/>
            <person name="Diaz-Muniz I."/>
            <person name="Dosti B."/>
            <person name="Smeianov V."/>
            <person name="Wechter W."/>
            <person name="Barabote R."/>
            <person name="Lorca G."/>
            <person name="Altermann E."/>
            <person name="Barrangou R."/>
            <person name="Ganesan B."/>
            <person name="Xie Y."/>
            <person name="Rawsthorne H."/>
            <person name="Tamir D."/>
            <person name="Parker C."/>
            <person name="Breidt F."/>
            <person name="Broadbent J.R."/>
            <person name="Hutkins R."/>
            <person name="O'Sullivan D."/>
            <person name="Steele J."/>
            <person name="Unlu G."/>
            <person name="Saier M.H. Jr."/>
            <person name="Klaenhammer T."/>
            <person name="Richardson P."/>
            <person name="Kozyavkin S."/>
            <person name="Weimer B.C."/>
            <person name="Mills D.A."/>
        </authorList>
    </citation>
    <scope>NUCLEOTIDE SEQUENCE [LARGE SCALE GENOMIC DNA]</scope>
    <source>
        <strain>ATCC 367 / BCRC 12310 / CIP 105137 / JCM 1170 / LMG 11437 / NCIMB 947 / NCTC 947</strain>
    </source>
</reference>
<evidence type="ECO:0000255" key="1">
    <source>
        <dbReference type="HAMAP-Rule" id="MF_00377"/>
    </source>
</evidence>
<organism>
    <name type="scientific">Levilactobacillus brevis (strain ATCC 367 / BCRC 12310 / CIP 105137 / JCM 1170 / LMG 11437 / NCIMB 947 / NCTC 947)</name>
    <name type="common">Lactobacillus brevis</name>
    <dbReference type="NCBI Taxonomy" id="387344"/>
    <lineage>
        <taxon>Bacteria</taxon>
        <taxon>Bacillati</taxon>
        <taxon>Bacillota</taxon>
        <taxon>Bacilli</taxon>
        <taxon>Lactobacillales</taxon>
        <taxon>Lactobacillaceae</taxon>
        <taxon>Levilactobacillus</taxon>
    </lineage>
</organism>
<gene>
    <name evidence="1" type="primary">dnaA</name>
    <name type="ordered locus">LVIS_0001</name>
</gene>
<feature type="chain" id="PRO_1000048659" description="Chromosomal replication initiator protein DnaA">
    <location>
        <begin position="1"/>
        <end position="452"/>
    </location>
</feature>
<feature type="region of interest" description="Domain I, interacts with DnaA modulators" evidence="1">
    <location>
        <begin position="1"/>
        <end position="72"/>
    </location>
</feature>
<feature type="region of interest" description="Domain II" evidence="1">
    <location>
        <begin position="72"/>
        <end position="114"/>
    </location>
</feature>
<feature type="region of interest" description="Domain III, AAA+ region" evidence="1">
    <location>
        <begin position="115"/>
        <end position="331"/>
    </location>
</feature>
<feature type="region of interest" description="Domain IV, binds dsDNA" evidence="1">
    <location>
        <begin position="332"/>
        <end position="452"/>
    </location>
</feature>
<feature type="binding site" evidence="1">
    <location>
        <position position="159"/>
    </location>
    <ligand>
        <name>ATP</name>
        <dbReference type="ChEBI" id="CHEBI:30616"/>
    </ligand>
</feature>
<feature type="binding site" evidence="1">
    <location>
        <position position="161"/>
    </location>
    <ligand>
        <name>ATP</name>
        <dbReference type="ChEBI" id="CHEBI:30616"/>
    </ligand>
</feature>
<feature type="binding site" evidence="1">
    <location>
        <position position="162"/>
    </location>
    <ligand>
        <name>ATP</name>
        <dbReference type="ChEBI" id="CHEBI:30616"/>
    </ligand>
</feature>
<feature type="binding site" evidence="1">
    <location>
        <position position="163"/>
    </location>
    <ligand>
        <name>ATP</name>
        <dbReference type="ChEBI" id="CHEBI:30616"/>
    </ligand>
</feature>
<keyword id="KW-0067">ATP-binding</keyword>
<keyword id="KW-0963">Cytoplasm</keyword>
<keyword id="KW-0235">DNA replication</keyword>
<keyword id="KW-0238">DNA-binding</keyword>
<keyword id="KW-0446">Lipid-binding</keyword>
<keyword id="KW-0547">Nucleotide-binding</keyword>
<keyword id="KW-1185">Reference proteome</keyword>
<sequence length="452" mass="51079">MPDMLTLWTDIKALFEENNSKTAYATWIETAKPIALDGNKLTLELPSPLHRDYWTHQHLDQQLVEYAYQAAHEDIQPVLILENERQQQATLKAKTAPVAAGEPVEPTPTFMKETALNSRYTFDTFVIGKGNQMAHAAALVVSEEPGVMYNPLFFYGGVGLGKTHLMHAIGNKMLEDRPDTKVKYVTSEAFTNDFINAIQTRTQEQFRQEYRNVDLLLVDDIQFFANKEGTQEEFFHTFNALYDDGKQIVLTSDRLPNEIPKLQDRLVSRFAWGLSVDITPPDLETRIAILRNKADADQIDIPDDTLSYIAGQIDSNVRELEGALARVQAYSQLMHQPIATDLAAEALKSLNLANASDAVTIPVIQDRVAKYFDVSLKDLKGKKRKKAIVMPRQIAMYLSRELTEASLPRIGNEFGGKDHTTVIHAYDKITESLKTDPQLQKDIDSLKDDLRR</sequence>
<dbReference type="EMBL" id="CP000416">
    <property type="protein sequence ID" value="ABJ63178.1"/>
    <property type="molecule type" value="Genomic_DNA"/>
</dbReference>
<dbReference type="RefSeq" id="WP_011666816.1">
    <property type="nucleotide sequence ID" value="NC_008497.1"/>
</dbReference>
<dbReference type="SMR" id="Q03UE4"/>
<dbReference type="STRING" id="387344.LVIS_0001"/>
<dbReference type="KEGG" id="lbr:LVIS_0001"/>
<dbReference type="eggNOG" id="COG0593">
    <property type="taxonomic scope" value="Bacteria"/>
</dbReference>
<dbReference type="HOGENOM" id="CLU_026910_3_1_9"/>
<dbReference type="Proteomes" id="UP000001652">
    <property type="component" value="Chromosome"/>
</dbReference>
<dbReference type="GO" id="GO:0005737">
    <property type="term" value="C:cytoplasm"/>
    <property type="evidence" value="ECO:0007669"/>
    <property type="project" value="UniProtKB-SubCell"/>
</dbReference>
<dbReference type="GO" id="GO:0005886">
    <property type="term" value="C:plasma membrane"/>
    <property type="evidence" value="ECO:0007669"/>
    <property type="project" value="TreeGrafter"/>
</dbReference>
<dbReference type="GO" id="GO:0005524">
    <property type="term" value="F:ATP binding"/>
    <property type="evidence" value="ECO:0007669"/>
    <property type="project" value="UniProtKB-UniRule"/>
</dbReference>
<dbReference type="GO" id="GO:0016887">
    <property type="term" value="F:ATP hydrolysis activity"/>
    <property type="evidence" value="ECO:0007669"/>
    <property type="project" value="InterPro"/>
</dbReference>
<dbReference type="GO" id="GO:0003688">
    <property type="term" value="F:DNA replication origin binding"/>
    <property type="evidence" value="ECO:0007669"/>
    <property type="project" value="UniProtKB-UniRule"/>
</dbReference>
<dbReference type="GO" id="GO:0008289">
    <property type="term" value="F:lipid binding"/>
    <property type="evidence" value="ECO:0007669"/>
    <property type="project" value="UniProtKB-KW"/>
</dbReference>
<dbReference type="GO" id="GO:0006270">
    <property type="term" value="P:DNA replication initiation"/>
    <property type="evidence" value="ECO:0007669"/>
    <property type="project" value="UniProtKB-UniRule"/>
</dbReference>
<dbReference type="GO" id="GO:0006275">
    <property type="term" value="P:regulation of DNA replication"/>
    <property type="evidence" value="ECO:0007669"/>
    <property type="project" value="UniProtKB-UniRule"/>
</dbReference>
<dbReference type="CDD" id="cd00009">
    <property type="entry name" value="AAA"/>
    <property type="match status" value="1"/>
</dbReference>
<dbReference type="CDD" id="cd06571">
    <property type="entry name" value="Bac_DnaA_C"/>
    <property type="match status" value="1"/>
</dbReference>
<dbReference type="FunFam" id="1.10.8.60:FF:000003">
    <property type="entry name" value="Chromosomal replication initiator protein DnaA"/>
    <property type="match status" value="1"/>
</dbReference>
<dbReference type="FunFam" id="3.40.50.300:FF:000668">
    <property type="entry name" value="Chromosomal replication initiator protein DnaA"/>
    <property type="match status" value="1"/>
</dbReference>
<dbReference type="Gene3D" id="1.10.1750.10">
    <property type="match status" value="1"/>
</dbReference>
<dbReference type="Gene3D" id="1.10.8.60">
    <property type="match status" value="1"/>
</dbReference>
<dbReference type="Gene3D" id="3.30.300.180">
    <property type="match status" value="1"/>
</dbReference>
<dbReference type="Gene3D" id="3.40.50.300">
    <property type="entry name" value="P-loop containing nucleotide triphosphate hydrolases"/>
    <property type="match status" value="1"/>
</dbReference>
<dbReference type="HAMAP" id="MF_00377">
    <property type="entry name" value="DnaA_bact"/>
    <property type="match status" value="1"/>
</dbReference>
<dbReference type="InterPro" id="IPR003593">
    <property type="entry name" value="AAA+_ATPase"/>
</dbReference>
<dbReference type="InterPro" id="IPR001957">
    <property type="entry name" value="Chromosome_initiator_DnaA"/>
</dbReference>
<dbReference type="InterPro" id="IPR020591">
    <property type="entry name" value="Chromosome_initiator_DnaA-like"/>
</dbReference>
<dbReference type="InterPro" id="IPR018312">
    <property type="entry name" value="Chromosome_initiator_DnaA_CS"/>
</dbReference>
<dbReference type="InterPro" id="IPR013159">
    <property type="entry name" value="DnaA_C"/>
</dbReference>
<dbReference type="InterPro" id="IPR013317">
    <property type="entry name" value="DnaA_dom"/>
</dbReference>
<dbReference type="InterPro" id="IPR024633">
    <property type="entry name" value="DnaA_N_dom"/>
</dbReference>
<dbReference type="InterPro" id="IPR038454">
    <property type="entry name" value="DnaA_N_sf"/>
</dbReference>
<dbReference type="InterPro" id="IPR027417">
    <property type="entry name" value="P-loop_NTPase"/>
</dbReference>
<dbReference type="InterPro" id="IPR010921">
    <property type="entry name" value="Trp_repressor/repl_initiator"/>
</dbReference>
<dbReference type="NCBIfam" id="TIGR00362">
    <property type="entry name" value="DnaA"/>
    <property type="match status" value="1"/>
</dbReference>
<dbReference type="PANTHER" id="PTHR30050">
    <property type="entry name" value="CHROMOSOMAL REPLICATION INITIATOR PROTEIN DNAA"/>
    <property type="match status" value="1"/>
</dbReference>
<dbReference type="PANTHER" id="PTHR30050:SF2">
    <property type="entry name" value="CHROMOSOMAL REPLICATION INITIATOR PROTEIN DNAA"/>
    <property type="match status" value="1"/>
</dbReference>
<dbReference type="Pfam" id="PF00308">
    <property type="entry name" value="Bac_DnaA"/>
    <property type="match status" value="1"/>
</dbReference>
<dbReference type="Pfam" id="PF08299">
    <property type="entry name" value="Bac_DnaA_C"/>
    <property type="match status" value="1"/>
</dbReference>
<dbReference type="Pfam" id="PF11638">
    <property type="entry name" value="DnaA_N"/>
    <property type="match status" value="1"/>
</dbReference>
<dbReference type="PRINTS" id="PR00051">
    <property type="entry name" value="DNAA"/>
</dbReference>
<dbReference type="SMART" id="SM00382">
    <property type="entry name" value="AAA"/>
    <property type="match status" value="1"/>
</dbReference>
<dbReference type="SMART" id="SM00760">
    <property type="entry name" value="Bac_DnaA_C"/>
    <property type="match status" value="1"/>
</dbReference>
<dbReference type="SUPFAM" id="SSF52540">
    <property type="entry name" value="P-loop containing nucleoside triphosphate hydrolases"/>
    <property type="match status" value="1"/>
</dbReference>
<dbReference type="SUPFAM" id="SSF48295">
    <property type="entry name" value="TrpR-like"/>
    <property type="match status" value="1"/>
</dbReference>
<dbReference type="PROSITE" id="PS01008">
    <property type="entry name" value="DNAA"/>
    <property type="match status" value="1"/>
</dbReference>
<proteinExistence type="inferred from homology"/>
<accession>Q03UE4</accession>
<name>DNAA_LEVBA</name>
<comment type="function">
    <text evidence="1">Plays an essential role in the initiation and regulation of chromosomal replication. ATP-DnaA binds to the origin of replication (oriC) to initiate formation of the DNA replication initiation complex once per cell cycle. Binds the DnaA box (a 9 base pair repeat at the origin) and separates the double-stranded (ds)DNA. Forms a right-handed helical filament on oriC DNA; dsDNA binds to the exterior of the filament while single-stranded (ss)DNA is stabiized in the filament's interior. The ATP-DnaA-oriC complex binds and stabilizes one strand of the AT-rich DNA unwinding element (DUE), permitting loading of DNA polymerase. After initiation quickly degrades to an ADP-DnaA complex that is not apt for DNA replication. Binds acidic phospholipids.</text>
</comment>
<comment type="subunit">
    <text evidence="1">Oligomerizes as a right-handed, spiral filament on DNA at oriC.</text>
</comment>
<comment type="subcellular location">
    <subcellularLocation>
        <location evidence="1">Cytoplasm</location>
    </subcellularLocation>
</comment>
<comment type="domain">
    <text evidence="1">Domain I is involved in oligomerization and binding regulators, domain II is flexibile and of varying length in different bacteria, domain III forms the AAA+ region, while domain IV binds dsDNA.</text>
</comment>
<comment type="similarity">
    <text evidence="1">Belongs to the DnaA family.</text>
</comment>